<organism>
    <name type="scientific">Solanum pennellii</name>
    <name type="common">Tomato</name>
    <name type="synonym">Lycopersicon pennellii</name>
    <dbReference type="NCBI Taxonomy" id="28526"/>
    <lineage>
        <taxon>Eukaryota</taxon>
        <taxon>Viridiplantae</taxon>
        <taxon>Streptophyta</taxon>
        <taxon>Embryophyta</taxon>
        <taxon>Tracheophyta</taxon>
        <taxon>Spermatophyta</taxon>
        <taxon>Magnoliopsida</taxon>
        <taxon>eudicotyledons</taxon>
        <taxon>Gunneridae</taxon>
        <taxon>Pentapetalae</taxon>
        <taxon>asterids</taxon>
        <taxon>lamiids</taxon>
        <taxon>Solanales</taxon>
        <taxon>Solanaceae</taxon>
        <taxon>Solanoideae</taxon>
        <taxon>Solaneae</taxon>
        <taxon>Solanum</taxon>
        <taxon>Solanum subgen. Lycopersicon</taxon>
    </lineage>
</organism>
<evidence type="ECO:0000250" key="1">
    <source>
        <dbReference type="UniProtKB" id="Q9JZG1"/>
    </source>
</evidence>
<evidence type="ECO:0000250" key="2">
    <source>
        <dbReference type="UniProtKB" id="Q9LPR4"/>
    </source>
</evidence>
<evidence type="ECO:0000255" key="3">
    <source>
        <dbReference type="PROSITE-ProRule" id="PRU01151"/>
    </source>
</evidence>
<evidence type="ECO:0000305" key="4"/>
<feature type="chain" id="PRO_0000140447" description="2-isopropylmalate synthase B">
    <location>
        <begin position="1"/>
        <end position="612"/>
    </location>
</feature>
<feature type="domain" description="Pyruvate carboxyltransferase" evidence="3">
    <location>
        <begin position="71"/>
        <end position="344"/>
    </location>
</feature>
<feature type="binding site" evidence="1">
    <location>
        <position position="80"/>
    </location>
    <ligand>
        <name>a divalent metal cation</name>
        <dbReference type="ChEBI" id="CHEBI:60240"/>
    </ligand>
</feature>
<feature type="binding site" evidence="1">
    <location>
        <position position="277"/>
    </location>
    <ligand>
        <name>a divalent metal cation</name>
        <dbReference type="ChEBI" id="CHEBI:60240"/>
    </ligand>
</feature>
<feature type="binding site" evidence="1">
    <location>
        <position position="313"/>
    </location>
    <ligand>
        <name>a divalent metal cation</name>
        <dbReference type="ChEBI" id="CHEBI:60240"/>
    </ligand>
</feature>
<gene>
    <name type="primary">IPMSB</name>
</gene>
<proteinExistence type="evidence at transcript level"/>
<name>LEU1B_SOLPN</name>
<accession>O04974</accession>
<comment type="function">
    <text evidence="2">Catalyzes the condensation of the acetyl group of acetyl-CoA with 3-methyl-2-oxobutanoate (2-oxoisovalerate) to form 3-carboxy-3-hydroxy-4-methylpentanoate (2-isopropylmalate).</text>
</comment>
<comment type="catalytic activity">
    <reaction evidence="2">
        <text>3-methyl-2-oxobutanoate + acetyl-CoA + H2O = (2S)-2-isopropylmalate + CoA + H(+)</text>
        <dbReference type="Rhea" id="RHEA:21524"/>
        <dbReference type="ChEBI" id="CHEBI:1178"/>
        <dbReference type="ChEBI" id="CHEBI:11851"/>
        <dbReference type="ChEBI" id="CHEBI:15377"/>
        <dbReference type="ChEBI" id="CHEBI:15378"/>
        <dbReference type="ChEBI" id="CHEBI:57287"/>
        <dbReference type="ChEBI" id="CHEBI:57288"/>
        <dbReference type="EC" id="2.3.3.13"/>
    </reaction>
</comment>
<comment type="cofactor">
    <cofactor evidence="1">
        <name>a divalent metal cation</name>
        <dbReference type="ChEBI" id="CHEBI:60240"/>
    </cofactor>
</comment>
<comment type="pathway">
    <text>Amino-acid biosynthesis; L-leucine biosynthesis; L-leucine from 3-methyl-2-oxobutanoate: step 1/4.</text>
</comment>
<comment type="subunit">
    <text evidence="2">Homodimer.</text>
</comment>
<comment type="similarity">
    <text evidence="4">Belongs to the alpha-IPM synthase/homocitrate synthase family. LeuA type 1 subfamily.</text>
</comment>
<reference key="1">
    <citation type="submission" date="1997-05" db="EMBL/GenBank/DDBJ databases">
        <title>Cloning of two L. pennellii 2-isopropylmalate synthase cDNA and their functional expression in yeast.</title>
        <authorList>
            <person name="Wei T."/>
            <person name="Maita D."/>
            <person name="Steffens J.C."/>
        </authorList>
    </citation>
    <scope>NUCLEOTIDE SEQUENCE [MRNA]</scope>
    <source>
        <tissue>Leaf</tissue>
    </source>
</reference>
<protein>
    <recommendedName>
        <fullName>2-isopropylmalate synthase B</fullName>
        <ecNumber>2.3.3.13</ecNumber>
    </recommendedName>
    <alternativeName>
        <fullName>Alpha-IPM synthase B</fullName>
    </alternativeName>
    <alternativeName>
        <fullName>Alpha-isopropylmalate synthase B</fullName>
    </alternativeName>
</protein>
<sequence>MASITANHPISGKPLISFRPKNPLLQTQTLFNFKPSISKHSNSSFSIPVVRCSIRRIPEYTPSHIPDPNYVRIFDTTLRDGEQSPGATMTTKEKLDVARQSAKLGVDIIEAGFPASSEADLEAVKLIAKEVGNGVYEEEYVPVICGLARCNKKDIDKAWEAVKYAKKPRIHTFIATSEVHMNYKLKMSRDQVVEKARSMVAYARSIGCEDVEFSPEDAGRSDPEFLYHILGEVIKAGATTLNIPDTVGYTVPEEFGQLIAKIKANTPGVEDVIISTHCQNDLGLSTANTLAGACAGARQLEVTINGIGERAGNASLEEVVMALKCRGEQVLGGLYTGINTQHILMSSKMVEGISGLHVQPHKAIVGANAFVHESGIHQDGMLKHKDTYEIISPEDIGLNRANESGIVFGKLSGVMLCKPKMLELGYEIEGKELDDLFWRFKSVAEKKKKITDDDLVALMSDEVFQPQFVWQLQNVQVTCGSLGLSTATVKLIDADGREHISCSVGTGPVDAAYKAVDLIVKVPVTLLEYSMNAVTQGIDAIASTRVLIRGENGHTSTHALTGETVHRTFSGTGADMDIVISSVRAYVGALNKMMSFRKLMAKNNKPESSAVI</sequence>
<keyword id="KW-0028">Amino-acid biosynthesis</keyword>
<keyword id="KW-0100">Branched-chain amino acid biosynthesis</keyword>
<keyword id="KW-0432">Leucine biosynthesis</keyword>
<keyword id="KW-0479">Metal-binding</keyword>
<keyword id="KW-0808">Transferase</keyword>
<dbReference type="EC" id="2.3.3.13"/>
<dbReference type="EMBL" id="AF004166">
    <property type="protein sequence ID" value="AAB61599.1"/>
    <property type="molecule type" value="mRNA"/>
</dbReference>
<dbReference type="RefSeq" id="NP_001310373.1">
    <property type="nucleotide sequence ID" value="NM_001323444.1"/>
</dbReference>
<dbReference type="SMR" id="O04974"/>
<dbReference type="GeneID" id="107023302"/>
<dbReference type="KEGG" id="spen:107023302"/>
<dbReference type="OrthoDB" id="55209at4069"/>
<dbReference type="UniPathway" id="UPA00048">
    <property type="reaction ID" value="UER00070"/>
</dbReference>
<dbReference type="Proteomes" id="UP000694930">
    <property type="component" value="Chromosome 6"/>
</dbReference>
<dbReference type="GO" id="GO:0009507">
    <property type="term" value="C:chloroplast"/>
    <property type="evidence" value="ECO:0007669"/>
    <property type="project" value="TreeGrafter"/>
</dbReference>
<dbReference type="GO" id="GO:0003852">
    <property type="term" value="F:2-isopropylmalate synthase activity"/>
    <property type="evidence" value="ECO:0007669"/>
    <property type="project" value="UniProtKB-EC"/>
</dbReference>
<dbReference type="GO" id="GO:0046872">
    <property type="term" value="F:metal ion binding"/>
    <property type="evidence" value="ECO:0007669"/>
    <property type="project" value="UniProtKB-KW"/>
</dbReference>
<dbReference type="GO" id="GO:0009098">
    <property type="term" value="P:L-leucine biosynthetic process"/>
    <property type="evidence" value="ECO:0007669"/>
    <property type="project" value="UniProtKB-UniPathway"/>
</dbReference>
<dbReference type="CDD" id="cd07940">
    <property type="entry name" value="DRE_TIM_IPMS"/>
    <property type="match status" value="1"/>
</dbReference>
<dbReference type="FunFam" id="3.20.20.70:FF:000010">
    <property type="entry name" value="2-isopropylmalate synthase"/>
    <property type="match status" value="1"/>
</dbReference>
<dbReference type="FunFam" id="1.10.238.260:FF:000003">
    <property type="entry name" value="2-isopropylmalate synthase 1 chloroplastic"/>
    <property type="match status" value="1"/>
</dbReference>
<dbReference type="FunFam" id="3.30.160.270:FF:000004">
    <property type="entry name" value="2-isopropylmalate synthase B"/>
    <property type="match status" value="1"/>
</dbReference>
<dbReference type="Gene3D" id="1.10.238.260">
    <property type="match status" value="1"/>
</dbReference>
<dbReference type="Gene3D" id="3.30.160.270">
    <property type="match status" value="1"/>
</dbReference>
<dbReference type="Gene3D" id="3.20.20.70">
    <property type="entry name" value="Aldolase class I"/>
    <property type="match status" value="1"/>
</dbReference>
<dbReference type="HAMAP" id="MF_01025">
    <property type="entry name" value="LeuA_type1"/>
    <property type="match status" value="1"/>
</dbReference>
<dbReference type="InterPro" id="IPR050073">
    <property type="entry name" value="2-IPM_HCS-like"/>
</dbReference>
<dbReference type="InterPro" id="IPR013709">
    <property type="entry name" value="2-isopropylmalate_synth_dimer"/>
</dbReference>
<dbReference type="InterPro" id="IPR002034">
    <property type="entry name" value="AIPM/Hcit_synth_CS"/>
</dbReference>
<dbReference type="InterPro" id="IPR013785">
    <property type="entry name" value="Aldolase_TIM"/>
</dbReference>
<dbReference type="InterPro" id="IPR054691">
    <property type="entry name" value="LeuA/HCS_post-cat"/>
</dbReference>
<dbReference type="InterPro" id="IPR036230">
    <property type="entry name" value="LeuA_allosteric_dom_sf"/>
</dbReference>
<dbReference type="InterPro" id="IPR005671">
    <property type="entry name" value="LeuA_bact_synth"/>
</dbReference>
<dbReference type="InterPro" id="IPR000891">
    <property type="entry name" value="PYR_CT"/>
</dbReference>
<dbReference type="NCBIfam" id="TIGR00973">
    <property type="entry name" value="leuA_bact"/>
    <property type="match status" value="1"/>
</dbReference>
<dbReference type="NCBIfam" id="NF002086">
    <property type="entry name" value="PRK00915.1-3"/>
    <property type="match status" value="1"/>
</dbReference>
<dbReference type="PANTHER" id="PTHR10277:SF9">
    <property type="entry name" value="2-ISOPROPYLMALATE SYNTHASE 1, CHLOROPLASTIC-RELATED"/>
    <property type="match status" value="1"/>
</dbReference>
<dbReference type="PANTHER" id="PTHR10277">
    <property type="entry name" value="HOMOCITRATE SYNTHASE-RELATED"/>
    <property type="match status" value="1"/>
</dbReference>
<dbReference type="Pfam" id="PF22617">
    <property type="entry name" value="HCS_D2"/>
    <property type="match status" value="1"/>
</dbReference>
<dbReference type="Pfam" id="PF00682">
    <property type="entry name" value="HMGL-like"/>
    <property type="match status" value="1"/>
</dbReference>
<dbReference type="Pfam" id="PF08502">
    <property type="entry name" value="LeuA_dimer"/>
    <property type="match status" value="1"/>
</dbReference>
<dbReference type="SMART" id="SM00917">
    <property type="entry name" value="LeuA_dimer"/>
    <property type="match status" value="1"/>
</dbReference>
<dbReference type="SUPFAM" id="SSF110921">
    <property type="entry name" value="2-isopropylmalate synthase LeuA, allosteric (dimerisation) domain"/>
    <property type="match status" value="1"/>
</dbReference>
<dbReference type="SUPFAM" id="SSF51569">
    <property type="entry name" value="Aldolase"/>
    <property type="match status" value="1"/>
</dbReference>
<dbReference type="PROSITE" id="PS00815">
    <property type="entry name" value="AIPM_HOMOCIT_SYNTH_1"/>
    <property type="match status" value="1"/>
</dbReference>
<dbReference type="PROSITE" id="PS50991">
    <property type="entry name" value="PYR_CT"/>
    <property type="match status" value="1"/>
</dbReference>